<gene>
    <name evidence="1" type="primary">rps4</name>
    <name type="ordered locus">Kcr_1579</name>
</gene>
<protein>
    <recommendedName>
        <fullName evidence="1">Small ribosomal subunit protein uS4</fullName>
    </recommendedName>
    <alternativeName>
        <fullName evidence="2">30S ribosomal protein S4</fullName>
    </alternativeName>
</protein>
<accession>B1L795</accession>
<reference key="1">
    <citation type="journal article" date="2008" name="Proc. Natl. Acad. Sci. U.S.A.">
        <title>A korarchaeal genome reveals new insights into the evolution of the Archaea.</title>
        <authorList>
            <person name="Elkins J.G."/>
            <person name="Podar M."/>
            <person name="Graham D.E."/>
            <person name="Makarova K.S."/>
            <person name="Wolf Y."/>
            <person name="Randau L."/>
            <person name="Hedlund B.P."/>
            <person name="Brochier-Armanet C."/>
            <person name="Kunin V."/>
            <person name="Anderson I."/>
            <person name="Lapidus A."/>
            <person name="Goltsman E."/>
            <person name="Barry K."/>
            <person name="Koonin E.V."/>
            <person name="Hugenholtz P."/>
            <person name="Kyrpides N."/>
            <person name="Wanner G."/>
            <person name="Richardson P."/>
            <person name="Keller M."/>
            <person name="Stetter K.O."/>
        </authorList>
    </citation>
    <scope>NUCLEOTIDE SEQUENCE [LARGE SCALE GENOMIC DNA]</scope>
    <source>
        <strain>OPF8</strain>
    </source>
</reference>
<comment type="function">
    <text evidence="1">One of the primary rRNA binding proteins, it binds directly to 16S rRNA where it nucleates assembly of the body of the 30S subunit.</text>
</comment>
<comment type="function">
    <text evidence="1">With S5 and S12 plays an important role in translational accuracy.</text>
</comment>
<comment type="subunit">
    <text evidence="1">Part of the 30S ribosomal subunit. Contacts protein S5. The interaction surface between S4 and S5 is involved in control of translational fidelity.</text>
</comment>
<comment type="similarity">
    <text evidence="1">Belongs to the universal ribosomal protein uS4 family.</text>
</comment>
<dbReference type="EMBL" id="CP000968">
    <property type="protein sequence ID" value="ACB08324.1"/>
    <property type="molecule type" value="Genomic_DNA"/>
</dbReference>
<dbReference type="RefSeq" id="WP_012310221.1">
    <property type="nucleotide sequence ID" value="NC_010482.1"/>
</dbReference>
<dbReference type="SMR" id="B1L795"/>
<dbReference type="FunCoup" id="B1L795">
    <property type="interactions" value="162"/>
</dbReference>
<dbReference type="STRING" id="374847.Kcr_1579"/>
<dbReference type="EnsemblBacteria" id="ACB08324">
    <property type="protein sequence ID" value="ACB08324"/>
    <property type="gene ID" value="Kcr_1579"/>
</dbReference>
<dbReference type="GeneID" id="6094855"/>
<dbReference type="KEGG" id="kcr:Kcr_1579"/>
<dbReference type="eggNOG" id="arCOG04239">
    <property type="taxonomic scope" value="Archaea"/>
</dbReference>
<dbReference type="HOGENOM" id="CLU_089738_1_1_2"/>
<dbReference type="InParanoid" id="B1L795"/>
<dbReference type="OrthoDB" id="10429at2157"/>
<dbReference type="PhylomeDB" id="B1L795"/>
<dbReference type="Proteomes" id="UP000001686">
    <property type="component" value="Chromosome"/>
</dbReference>
<dbReference type="GO" id="GO:0015935">
    <property type="term" value="C:small ribosomal subunit"/>
    <property type="evidence" value="ECO:0000318"/>
    <property type="project" value="GO_Central"/>
</dbReference>
<dbReference type="GO" id="GO:0019843">
    <property type="term" value="F:rRNA binding"/>
    <property type="evidence" value="ECO:0000318"/>
    <property type="project" value="GO_Central"/>
</dbReference>
<dbReference type="GO" id="GO:0003735">
    <property type="term" value="F:structural constituent of ribosome"/>
    <property type="evidence" value="ECO:0000318"/>
    <property type="project" value="GO_Central"/>
</dbReference>
<dbReference type="GO" id="GO:0042274">
    <property type="term" value="P:ribosomal small subunit biogenesis"/>
    <property type="evidence" value="ECO:0000318"/>
    <property type="project" value="GO_Central"/>
</dbReference>
<dbReference type="GO" id="GO:0006412">
    <property type="term" value="P:translation"/>
    <property type="evidence" value="ECO:0007669"/>
    <property type="project" value="UniProtKB-UniRule"/>
</dbReference>
<dbReference type="CDD" id="cd00165">
    <property type="entry name" value="S4"/>
    <property type="match status" value="1"/>
</dbReference>
<dbReference type="Gene3D" id="3.10.290.10">
    <property type="entry name" value="RNA-binding S4 domain"/>
    <property type="match status" value="1"/>
</dbReference>
<dbReference type="HAMAP" id="MF_01306_A">
    <property type="entry name" value="Ribosomal_uS4_A"/>
    <property type="match status" value="1"/>
</dbReference>
<dbReference type="InterPro" id="IPR022801">
    <property type="entry name" value="Ribosomal_uS4"/>
</dbReference>
<dbReference type="InterPro" id="IPR022802">
    <property type="entry name" value="Ribosomal_uS4_arc"/>
</dbReference>
<dbReference type="InterPro" id="IPR005710">
    <property type="entry name" value="Ribosomal_uS4_euk/arc"/>
</dbReference>
<dbReference type="InterPro" id="IPR001912">
    <property type="entry name" value="Ribosomal_uS4_N"/>
</dbReference>
<dbReference type="InterPro" id="IPR002942">
    <property type="entry name" value="S4_RNA-bd"/>
</dbReference>
<dbReference type="InterPro" id="IPR036986">
    <property type="entry name" value="S4_RNA-bd_sf"/>
</dbReference>
<dbReference type="NCBIfam" id="NF003139">
    <property type="entry name" value="PRK04051.1"/>
    <property type="match status" value="1"/>
</dbReference>
<dbReference type="NCBIfam" id="TIGR01018">
    <property type="entry name" value="uS4_arch"/>
    <property type="match status" value="1"/>
</dbReference>
<dbReference type="PANTHER" id="PTHR11831">
    <property type="entry name" value="30S 40S RIBOSOMAL PROTEIN"/>
    <property type="match status" value="1"/>
</dbReference>
<dbReference type="PANTHER" id="PTHR11831:SF5">
    <property type="entry name" value="40S RIBOSOMAL PROTEIN S9"/>
    <property type="match status" value="1"/>
</dbReference>
<dbReference type="Pfam" id="PF01479">
    <property type="entry name" value="S4"/>
    <property type="match status" value="1"/>
</dbReference>
<dbReference type="SMART" id="SM01390">
    <property type="entry name" value="Ribosomal_S4"/>
    <property type="match status" value="1"/>
</dbReference>
<dbReference type="SMART" id="SM00363">
    <property type="entry name" value="S4"/>
    <property type="match status" value="1"/>
</dbReference>
<dbReference type="SUPFAM" id="SSF55174">
    <property type="entry name" value="Alpha-L RNA-binding motif"/>
    <property type="match status" value="1"/>
</dbReference>
<dbReference type="PROSITE" id="PS50889">
    <property type="entry name" value="S4"/>
    <property type="match status" value="1"/>
</dbReference>
<evidence type="ECO:0000255" key="1">
    <source>
        <dbReference type="HAMAP-Rule" id="MF_01306"/>
    </source>
</evidence>
<evidence type="ECO:0000305" key="2"/>
<proteinExistence type="inferred from homology"/>
<keyword id="KW-1185">Reference proteome</keyword>
<keyword id="KW-0687">Ribonucleoprotein</keyword>
<keyword id="KW-0689">Ribosomal protein</keyword>
<keyword id="KW-0694">RNA-binding</keyword>
<keyword id="KW-0699">rRNA-binding</keyword>
<organism>
    <name type="scientific">Korarchaeum cryptofilum (strain OPF8)</name>
    <dbReference type="NCBI Taxonomy" id="374847"/>
    <lineage>
        <taxon>Archaea</taxon>
        <taxon>Thermoproteota</taxon>
        <taxon>Candidatus Korarchaeia</taxon>
        <taxon>Candidatus Korarchaeales</taxon>
        <taxon>Candidatus Korarchaeaceae</taxon>
        <taxon>Candidatus Korarchaeum</taxon>
    </lineage>
</organism>
<sequence length="166" mass="19928">MGDIRKHRKKYERPYKPWDRRVLEETNRLAGYYGLRNKRELWRMSFLAKKYRRIARQLLAAPKSESWKVEPIIKKLQALGILSKDATLDDLLDLSVEQFLERRLQTIVWRKGFAKSPYMARQLITHGHIRVNGRRIRQPSYLVKIEEEDKIECLHPSCLEVEKEVR</sequence>
<feature type="chain" id="PRO_1000140747" description="Small ribosomal subunit protein uS4">
    <location>
        <begin position="1"/>
        <end position="166"/>
    </location>
</feature>
<feature type="domain" description="S4 RNA-binding" evidence="1">
    <location>
        <begin position="102"/>
        <end position="164"/>
    </location>
</feature>
<name>RS4_KORCO</name>